<reference key="1">
    <citation type="journal article" date="2000" name="Nature">
        <title>Sequence and analysis of chromosome 1 of the plant Arabidopsis thaliana.</title>
        <authorList>
            <person name="Theologis A."/>
            <person name="Ecker J.R."/>
            <person name="Palm C.J."/>
            <person name="Federspiel N.A."/>
            <person name="Kaul S."/>
            <person name="White O."/>
            <person name="Alonso J."/>
            <person name="Altafi H."/>
            <person name="Araujo R."/>
            <person name="Bowman C.L."/>
            <person name="Brooks S.Y."/>
            <person name="Buehler E."/>
            <person name="Chan A."/>
            <person name="Chao Q."/>
            <person name="Chen H."/>
            <person name="Cheuk R.F."/>
            <person name="Chin C.W."/>
            <person name="Chung M.K."/>
            <person name="Conn L."/>
            <person name="Conway A.B."/>
            <person name="Conway A.R."/>
            <person name="Creasy T.H."/>
            <person name="Dewar K."/>
            <person name="Dunn P."/>
            <person name="Etgu P."/>
            <person name="Feldblyum T.V."/>
            <person name="Feng J.-D."/>
            <person name="Fong B."/>
            <person name="Fujii C.Y."/>
            <person name="Gill J.E."/>
            <person name="Goldsmith A.D."/>
            <person name="Haas B."/>
            <person name="Hansen N.F."/>
            <person name="Hughes B."/>
            <person name="Huizar L."/>
            <person name="Hunter J.L."/>
            <person name="Jenkins J."/>
            <person name="Johnson-Hopson C."/>
            <person name="Khan S."/>
            <person name="Khaykin E."/>
            <person name="Kim C.J."/>
            <person name="Koo H.L."/>
            <person name="Kremenetskaia I."/>
            <person name="Kurtz D.B."/>
            <person name="Kwan A."/>
            <person name="Lam B."/>
            <person name="Langin-Hooper S."/>
            <person name="Lee A."/>
            <person name="Lee J.M."/>
            <person name="Lenz C.A."/>
            <person name="Li J.H."/>
            <person name="Li Y.-P."/>
            <person name="Lin X."/>
            <person name="Liu S.X."/>
            <person name="Liu Z.A."/>
            <person name="Luros J.S."/>
            <person name="Maiti R."/>
            <person name="Marziali A."/>
            <person name="Militscher J."/>
            <person name="Miranda M."/>
            <person name="Nguyen M."/>
            <person name="Nierman W.C."/>
            <person name="Osborne B.I."/>
            <person name="Pai G."/>
            <person name="Peterson J."/>
            <person name="Pham P.K."/>
            <person name="Rizzo M."/>
            <person name="Rooney T."/>
            <person name="Rowley D."/>
            <person name="Sakano H."/>
            <person name="Salzberg S.L."/>
            <person name="Schwartz J.R."/>
            <person name="Shinn P."/>
            <person name="Southwick A.M."/>
            <person name="Sun H."/>
            <person name="Tallon L.J."/>
            <person name="Tambunga G."/>
            <person name="Toriumi M.J."/>
            <person name="Town C.D."/>
            <person name="Utterback T."/>
            <person name="Van Aken S."/>
            <person name="Vaysberg M."/>
            <person name="Vysotskaia V.S."/>
            <person name="Walker M."/>
            <person name="Wu D."/>
            <person name="Yu G."/>
            <person name="Fraser C.M."/>
            <person name="Venter J.C."/>
            <person name="Davis R.W."/>
        </authorList>
    </citation>
    <scope>NUCLEOTIDE SEQUENCE [LARGE SCALE GENOMIC DNA]</scope>
    <source>
        <strain>cv. Columbia</strain>
    </source>
</reference>
<reference key="2">
    <citation type="journal article" date="2017" name="Plant J.">
        <title>Araport11: a complete reannotation of the Arabidopsis thaliana reference genome.</title>
        <authorList>
            <person name="Cheng C.Y."/>
            <person name="Krishnakumar V."/>
            <person name="Chan A.P."/>
            <person name="Thibaud-Nissen F."/>
            <person name="Schobel S."/>
            <person name="Town C.D."/>
        </authorList>
    </citation>
    <scope>GENOME REANNOTATION</scope>
    <source>
        <strain>cv. Columbia</strain>
    </source>
</reference>
<reference key="3">
    <citation type="submission" date="2003-12" db="EMBL/GenBank/DDBJ databases">
        <title>Arabidopsis ORF clones.</title>
        <authorList>
            <person name="Kim C.J."/>
            <person name="Chen H."/>
            <person name="Cheuk R."/>
            <person name="Shinn P."/>
            <person name="Carninci P."/>
            <person name="Hayashizaki Y."/>
            <person name="Ishida J."/>
            <person name="Kamiya A."/>
            <person name="Kawai J."/>
            <person name="Narusaka M."/>
            <person name="Sakurai T."/>
            <person name="Satou M."/>
            <person name="Seki M."/>
            <person name="Shinozaki K."/>
            <person name="Ecker J.R."/>
        </authorList>
    </citation>
    <scope>NUCLEOTIDE SEQUENCE [LARGE SCALE MRNA]</scope>
    <source>
        <strain>cv. Columbia</strain>
    </source>
</reference>
<reference key="4">
    <citation type="submission" date="2004-09" db="EMBL/GenBank/DDBJ databases">
        <title>Large-scale analysis of RIKEN Arabidopsis full-length (RAFL) cDNAs.</title>
        <authorList>
            <person name="Totoki Y."/>
            <person name="Seki M."/>
            <person name="Ishida J."/>
            <person name="Nakajima M."/>
            <person name="Enju A."/>
            <person name="Kamiya A."/>
            <person name="Narusaka M."/>
            <person name="Shin-i T."/>
            <person name="Nakagawa M."/>
            <person name="Sakamoto N."/>
            <person name="Oishi K."/>
            <person name="Kohara Y."/>
            <person name="Kobayashi M."/>
            <person name="Toyoda A."/>
            <person name="Sakaki Y."/>
            <person name="Sakurai T."/>
            <person name="Iida K."/>
            <person name="Akiyama K."/>
            <person name="Satou M."/>
            <person name="Toyoda T."/>
            <person name="Konagaya A."/>
            <person name="Carninci P."/>
            <person name="Kawai J."/>
            <person name="Hayashizaki Y."/>
            <person name="Shinozaki K."/>
        </authorList>
    </citation>
    <scope>NUCLEOTIDE SEQUENCE [LARGE SCALE MRNA]</scope>
    <source>
        <strain>cv. Columbia</strain>
    </source>
</reference>
<sequence length="316" mass="36066">MDMSVIMRYGDDKAEELCLEVEDYWARVDESDGFDVEGIQAPPGGTPLIHYDCHLPNSRHPDPVLVKLYASAGLHRYNMLEGTNFKLVDVMKFNKLMMHLSPFYITLLAQDPVSRSQQTFQVQVDEHCLSTMDLTVLIARPKAVSTNESVLAPQSFSVEESPEWPSDFNDGKRFYRVKESELRNNDWISLYLQLVLVSHDRMRISDSDLSKLKIVEAVIETKDDMLPPNERLLNAKTAIVYITFKGFTKCRIGDEHTERKTIVRRIFDEDTGHLSIKGELIGEYKLGGDFDPGCYFNSPAILEARRICQGLPPQPF</sequence>
<keyword id="KW-1185">Reference proteome</keyword>
<name>Y1277_ARATH</name>
<dbReference type="EMBL" id="AC009525">
    <property type="protein sequence ID" value="AAF02890.1"/>
    <property type="molecule type" value="Genomic_DNA"/>
</dbReference>
<dbReference type="EMBL" id="AC022521">
    <property type="status" value="NOT_ANNOTATED_CDS"/>
    <property type="molecule type" value="Genomic_DNA"/>
</dbReference>
<dbReference type="EMBL" id="CP002684">
    <property type="protein sequence ID" value="AEE27468.1"/>
    <property type="molecule type" value="Genomic_DNA"/>
</dbReference>
<dbReference type="EMBL" id="BT010877">
    <property type="protein sequence ID" value="AAR24655.1"/>
    <property type="molecule type" value="mRNA"/>
</dbReference>
<dbReference type="EMBL" id="AK175758">
    <property type="protein sequence ID" value="BAD43521.1"/>
    <property type="molecule type" value="mRNA"/>
</dbReference>
<dbReference type="EMBL" id="AK175893">
    <property type="protein sequence ID" value="BAD43656.1"/>
    <property type="molecule type" value="mRNA"/>
</dbReference>
<dbReference type="PIR" id="F86157">
    <property type="entry name" value="F86157"/>
</dbReference>
<dbReference type="RefSeq" id="NP_171776.2">
    <property type="nucleotide sequence ID" value="NM_100156.5"/>
</dbReference>
<dbReference type="SMR" id="Q9SRX1"/>
<dbReference type="STRING" id="3702.Q9SRX1"/>
<dbReference type="iPTMnet" id="Q9SRX1"/>
<dbReference type="PaxDb" id="3702-AT1G02770.1"/>
<dbReference type="ProteomicsDB" id="242473"/>
<dbReference type="EnsemblPlants" id="AT1G02770.1">
    <property type="protein sequence ID" value="AT1G02770.1"/>
    <property type="gene ID" value="AT1G02770"/>
</dbReference>
<dbReference type="GeneID" id="839421"/>
<dbReference type="Gramene" id="AT1G02770.1">
    <property type="protein sequence ID" value="AT1G02770.1"/>
    <property type="gene ID" value="AT1G02770"/>
</dbReference>
<dbReference type="KEGG" id="ath:AT1G02770"/>
<dbReference type="Araport" id="AT1G02770"/>
<dbReference type="TAIR" id="AT1G02770"/>
<dbReference type="HOGENOM" id="CLU_053767_0_1_1"/>
<dbReference type="InParanoid" id="Q9SRX1"/>
<dbReference type="PhylomeDB" id="Q9SRX1"/>
<dbReference type="PRO" id="PR:Q9SRX1"/>
<dbReference type="Proteomes" id="UP000006548">
    <property type="component" value="Chromosome 1"/>
</dbReference>
<dbReference type="ExpressionAtlas" id="Q9SRX1">
    <property type="expression patterns" value="baseline and differential"/>
</dbReference>
<dbReference type="InterPro" id="IPR006462">
    <property type="entry name" value="MS5"/>
</dbReference>
<dbReference type="NCBIfam" id="TIGR01572">
    <property type="entry name" value="A_thl_para_3677"/>
    <property type="match status" value="1"/>
</dbReference>
<dbReference type="PANTHER" id="PTHR31260">
    <property type="entry name" value="CYSTATIN/MONELLIN SUPERFAMILY PROTEIN"/>
    <property type="match status" value="1"/>
</dbReference>
<dbReference type="PANTHER" id="PTHR31260:SF35">
    <property type="entry name" value="MALECTIN-LIKE DOMAIN-CONTAINING PROTEIN"/>
    <property type="match status" value="1"/>
</dbReference>
<dbReference type="Pfam" id="PF04776">
    <property type="entry name" value="protein_MS5"/>
    <property type="match status" value="1"/>
</dbReference>
<protein>
    <recommendedName>
        <fullName>UPF0725 protein At1g02770</fullName>
    </recommendedName>
</protein>
<feature type="chain" id="PRO_0000363121" description="UPF0725 protein At1g02770">
    <location>
        <begin position="1"/>
        <end position="316"/>
    </location>
</feature>
<proteinExistence type="evidence at transcript level"/>
<accession>Q9SRX1</accession>
<evidence type="ECO:0000305" key="1"/>
<comment type="similarity">
    <text evidence="1">Belongs to the UPF0725 (EMB2204) family.</text>
</comment>
<organism>
    <name type="scientific">Arabidopsis thaliana</name>
    <name type="common">Mouse-ear cress</name>
    <dbReference type="NCBI Taxonomy" id="3702"/>
    <lineage>
        <taxon>Eukaryota</taxon>
        <taxon>Viridiplantae</taxon>
        <taxon>Streptophyta</taxon>
        <taxon>Embryophyta</taxon>
        <taxon>Tracheophyta</taxon>
        <taxon>Spermatophyta</taxon>
        <taxon>Magnoliopsida</taxon>
        <taxon>eudicotyledons</taxon>
        <taxon>Gunneridae</taxon>
        <taxon>Pentapetalae</taxon>
        <taxon>rosids</taxon>
        <taxon>malvids</taxon>
        <taxon>Brassicales</taxon>
        <taxon>Brassicaceae</taxon>
        <taxon>Camelineae</taxon>
        <taxon>Arabidopsis</taxon>
    </lineage>
</organism>
<gene>
    <name type="ordered locus">At1g02770</name>
    <name type="ORF">F22D16.24</name>
    <name type="ORF">T14P4.24</name>
</gene>